<organism>
    <name type="scientific">Corynebacterium amycolatum</name>
    <dbReference type="NCBI Taxonomy" id="43765"/>
    <lineage>
        <taxon>Bacteria</taxon>
        <taxon>Bacillati</taxon>
        <taxon>Actinomycetota</taxon>
        <taxon>Actinomycetes</taxon>
        <taxon>Mycobacteriales</taxon>
        <taxon>Corynebacteriaceae</taxon>
        <taxon>Corynebacterium</taxon>
    </lineage>
</organism>
<name>PORA_CORAY</name>
<comment type="function">
    <text evidence="3 4">Forms water-filled channels that favor the permeation of cations.</text>
</comment>
<comment type="subcellular location">
    <subcellularLocation>
        <location evidence="3 4 6">Secreted</location>
        <location evidence="3 4 6">Cell wall</location>
    </subcellularLocation>
    <text evidence="3 4 6">Due to the absence of corynemycolates in the cell envelope the nature of the permeability barrier this porin is part of remains unclear.</text>
</comment>
<comment type="similarity">
    <text evidence="6">Belongs to the PorA family.</text>
</comment>
<keyword id="KW-0134">Cell wall</keyword>
<keyword id="KW-0903">Direct protein sequencing</keyword>
<keyword id="KW-0406">Ion transport</keyword>
<keyword id="KW-0964">Secreted</keyword>
<keyword id="KW-0732">Signal</keyword>
<keyword id="KW-0813">Transport</keyword>
<accession>C0HJE6</accession>
<feature type="signal peptide" evidence="1">
    <location>
        <begin position="1"/>
        <end position="35"/>
    </location>
</feature>
<feature type="chain" id="PRO_0000430486" description="Porin PorA" evidence="1">
    <location>
        <begin position="36"/>
        <end position="386"/>
    </location>
</feature>
<feature type="region of interest" description="Disordered" evidence="2">
    <location>
        <begin position="53"/>
        <end position="78"/>
    </location>
</feature>
<feature type="compositionally biased region" description="Polar residues" evidence="2">
    <location>
        <begin position="53"/>
        <end position="63"/>
    </location>
</feature>
<feature type="compositionally biased region" description="Basic and acidic residues" evidence="2">
    <location>
        <begin position="64"/>
        <end position="78"/>
    </location>
</feature>
<protein>
    <recommendedName>
        <fullName evidence="5">Porin PorA</fullName>
    </recommendedName>
</protein>
<evidence type="ECO:0000255" key="1"/>
<evidence type="ECO:0000256" key="2">
    <source>
        <dbReference type="SAM" id="MobiDB-lite"/>
    </source>
</evidence>
<evidence type="ECO:0000269" key="3">
    <source>
    </source>
</evidence>
<evidence type="ECO:0000269" key="4">
    <source>
    </source>
</evidence>
<evidence type="ECO:0000303" key="5">
    <source>
    </source>
</evidence>
<evidence type="ECO:0000305" key="6"/>
<reference evidence="6" key="1">
    <citation type="journal article" date="2013" name="Biochim. Biophys. Acta">
        <title>Identification and characterization of the channel-forming protein in the cell wall of Corynebacterium amycolatum.</title>
        <authorList>
            <person name="Soltan Mohammadi N."/>
            <person name="Mafakheri S."/>
            <person name="Abdali N."/>
            <person name="Barcena-Uribarri I."/>
            <person name="Tauch A."/>
            <person name="Benz R."/>
        </authorList>
    </citation>
    <scope>NUCLEOTIDE SEQUENCE [MRNA]</scope>
    <scope>PROTEIN SEQUENCE OF 189-199; 276-281; 306-315 AND 333-342</scope>
    <scope>FUNCTION</scope>
    <scope>SUBCELLULAR LOCATION</scope>
    <source>
        <strain evidence="4">ATCC 49368 / DSM 6922 / JCM 7447 / KCTC 3432 / NBRC 15207 / NCIMB 13130 / S160</strain>
    </source>
</reference>
<reference evidence="6" key="2">
    <citation type="journal article" date="2009" name="Int. Microbiol.">
        <title>Identification of a cell-wall channel in the corynemycolic acid-free Gram-positive bacterium Corynebacterium amycolatum.</title>
        <authorList>
            <person name="Dorner U."/>
            <person name="Schiffler B."/>
            <person name="Laneelle M.A."/>
            <person name="Daffe M."/>
            <person name="Benz R."/>
        </authorList>
    </citation>
    <scope>FUNCTION</scope>
    <scope>SUBCELLULAR LOCATION</scope>
    <source>
        <strain evidence="3">ATCC 49368 / DSM 6922 / JCM 7447 / KCTC 3432 / NBRC 15207 / NCIMB 13130 / S160</strain>
    </source>
</reference>
<dbReference type="SMR" id="C0HJE6"/>
<dbReference type="TCDB" id="1.B.163.1.1">
    <property type="family name" value="the cell wall porin-2 (pora2) family"/>
</dbReference>
<dbReference type="GO" id="GO:0005576">
    <property type="term" value="C:extracellular region"/>
    <property type="evidence" value="ECO:0007669"/>
    <property type="project" value="UniProtKB-KW"/>
</dbReference>
<dbReference type="GO" id="GO:0006811">
    <property type="term" value="P:monoatomic ion transport"/>
    <property type="evidence" value="ECO:0007669"/>
    <property type="project" value="UniProtKB-KW"/>
</dbReference>
<dbReference type="InterPro" id="IPR021424">
    <property type="entry name" value="PorA"/>
</dbReference>
<dbReference type="Pfam" id="PF11271">
    <property type="entry name" value="PorA"/>
    <property type="match status" value="1"/>
</dbReference>
<gene>
    <name evidence="5" type="primary">porA</name>
</gene>
<proteinExistence type="evidence at protein level"/>
<sequence length="386" mass="43366">MKRTLGHALIIIGAALIVIAVLLPTFLVPRLRVIPLDTVSDTITEVRDGTLLDSSQLGKNEPTPNRKNDPRCKAETDEEKRDLPVHCFINDKTPMQSKRHVEIEEPADEKIATLQVGTTLLRDDRKEPKNLINAILDRITVDRSTAYPVDDPISSVAINAPQGGSDTKPPTFTRPGIQYQFPFGAQKKSYPYYDVQAMRNFEIDFVGEETQDGVKVYKYSMTIPPQNLYESLTEHFTRDGRKLTEADKSSLASMRLSFPAHKWGLEGDDDVELDRYYTNVRTVRVEPTSGVIVNGTEEMFMFYAKDDKEAEEIASKAGREKEAKEQNRTAMKYTAQWDEGSKGRQMDRAKEARKSLTIGGTVAPWILGILGLVPIVIGFRIRSKSA</sequence>